<dbReference type="EMBL" id="AF521099">
    <property type="protein sequence ID" value="AAM77751.1"/>
    <property type="molecule type" value="mRNA"/>
</dbReference>
<dbReference type="EMBL" id="AK022519">
    <property type="protein sequence ID" value="BAB14075.1"/>
    <property type="molecule type" value="mRNA"/>
</dbReference>
<dbReference type="EMBL" id="AL513365">
    <property type="status" value="NOT_ANNOTATED_CDS"/>
    <property type="molecule type" value="Genomic_DNA"/>
</dbReference>
<dbReference type="EMBL" id="BC028566">
    <property type="protein sequence ID" value="AAH28566.1"/>
    <property type="molecule type" value="mRNA"/>
</dbReference>
<dbReference type="CCDS" id="CCDS280.1"/>
<dbReference type="RefSeq" id="NP_078950.1">
    <property type="nucleotide sequence ID" value="NM_024674.6"/>
</dbReference>
<dbReference type="RefSeq" id="XP_011540450.1">
    <property type="nucleotide sequence ID" value="XM_011542148.3"/>
</dbReference>
<dbReference type="RefSeq" id="XP_054194727.1">
    <property type="nucleotide sequence ID" value="XM_054338752.1"/>
</dbReference>
<dbReference type="PDB" id="2CQF">
    <property type="method" value="NMR"/>
    <property type="chains" value="A=137-186"/>
</dbReference>
<dbReference type="PDB" id="2LI8">
    <property type="method" value="NMR"/>
    <property type="chains" value="A=124-186"/>
</dbReference>
<dbReference type="PDB" id="5UDZ">
    <property type="method" value="X-ray"/>
    <property type="resolution" value="2.00 A"/>
    <property type="chains" value="A/B=31-187"/>
</dbReference>
<dbReference type="PDB" id="8OPS">
    <property type="method" value="EM"/>
    <property type="resolution" value="3.82 A"/>
    <property type="chains" value="B=1-209"/>
</dbReference>
<dbReference type="PDB" id="8OPT">
    <property type="method" value="EM"/>
    <property type="resolution" value="3.65 A"/>
    <property type="chains" value="B=1-209"/>
</dbReference>
<dbReference type="PDB" id="8OST">
    <property type="method" value="EM"/>
    <property type="resolution" value="3.69 A"/>
    <property type="chains" value="B=1-209"/>
</dbReference>
<dbReference type="PDBsum" id="2CQF"/>
<dbReference type="PDBsum" id="2LI8"/>
<dbReference type="PDBsum" id="5UDZ"/>
<dbReference type="PDBsum" id="8OPS"/>
<dbReference type="PDBsum" id="8OPT"/>
<dbReference type="PDBsum" id="8OST"/>
<dbReference type="BMRB" id="Q9H9Z2"/>
<dbReference type="EMDB" id="EMD-17086"/>
<dbReference type="EMDB" id="EMD-17087"/>
<dbReference type="EMDB" id="EMD-17164"/>
<dbReference type="SMR" id="Q9H9Z2"/>
<dbReference type="BioGRID" id="122842">
    <property type="interactions" value="434"/>
</dbReference>
<dbReference type="FunCoup" id="Q9H9Z2">
    <property type="interactions" value="397"/>
</dbReference>
<dbReference type="IntAct" id="Q9H9Z2">
    <property type="interactions" value="683"/>
</dbReference>
<dbReference type="MINT" id="Q9H9Z2"/>
<dbReference type="STRING" id="9606.ENSP00000363314"/>
<dbReference type="BindingDB" id="Q9H9Z2"/>
<dbReference type="ChEMBL" id="CHEMBL4523458"/>
<dbReference type="GlyCosmos" id="Q9H9Z2">
    <property type="glycosylation" value="1 site, 2 glycans"/>
</dbReference>
<dbReference type="GlyGen" id="Q9H9Z2">
    <property type="glycosylation" value="1 site, 2 O-linked glycans (1 site)"/>
</dbReference>
<dbReference type="iPTMnet" id="Q9H9Z2"/>
<dbReference type="PhosphoSitePlus" id="Q9H9Z2"/>
<dbReference type="SwissPalm" id="Q9H9Z2"/>
<dbReference type="BioMuta" id="LIN28A"/>
<dbReference type="DMDM" id="74752750"/>
<dbReference type="jPOST" id="Q9H9Z2"/>
<dbReference type="MassIVE" id="Q9H9Z2"/>
<dbReference type="PaxDb" id="9606-ENSP00000363314"/>
<dbReference type="PeptideAtlas" id="Q9H9Z2"/>
<dbReference type="ProteomicsDB" id="81371"/>
<dbReference type="Antibodypedia" id="30634">
    <property type="antibodies" value="741 antibodies from 44 providers"/>
</dbReference>
<dbReference type="CPTC" id="Q9H9Z2">
    <property type="antibodies" value="1 antibody"/>
</dbReference>
<dbReference type="DNASU" id="79727"/>
<dbReference type="Ensembl" id="ENST00000254231.4">
    <property type="protein sequence ID" value="ENSP00000254231.4"/>
    <property type="gene ID" value="ENSG00000131914.11"/>
</dbReference>
<dbReference type="Ensembl" id="ENST00000326279.11">
    <property type="protein sequence ID" value="ENSP00000363314.3"/>
    <property type="gene ID" value="ENSG00000131914.11"/>
</dbReference>
<dbReference type="GeneID" id="79727"/>
<dbReference type="KEGG" id="hsa:79727"/>
<dbReference type="MANE-Select" id="ENST00000326279.11">
    <property type="protein sequence ID" value="ENSP00000363314.3"/>
    <property type="RefSeq nucleotide sequence ID" value="NM_024674.6"/>
    <property type="RefSeq protein sequence ID" value="NP_078950.1"/>
</dbReference>
<dbReference type="UCSC" id="uc001bmj.4">
    <property type="organism name" value="human"/>
</dbReference>
<dbReference type="AGR" id="HGNC:15986"/>
<dbReference type="CTD" id="79727"/>
<dbReference type="DisGeNET" id="79727"/>
<dbReference type="GeneCards" id="LIN28A"/>
<dbReference type="HGNC" id="HGNC:15986">
    <property type="gene designation" value="LIN28A"/>
</dbReference>
<dbReference type="HPA" id="ENSG00000131914">
    <property type="expression patterns" value="Tissue enriched (testis)"/>
</dbReference>
<dbReference type="MIM" id="611043">
    <property type="type" value="gene"/>
</dbReference>
<dbReference type="neXtProt" id="NX_Q9H9Z2"/>
<dbReference type="OpenTargets" id="ENSG00000131914"/>
<dbReference type="PharmGKB" id="PA165751523"/>
<dbReference type="VEuPathDB" id="HostDB:ENSG00000131914"/>
<dbReference type="eggNOG" id="KOG3070">
    <property type="taxonomic scope" value="Eukaryota"/>
</dbReference>
<dbReference type="GeneTree" id="ENSGT00940000153295"/>
<dbReference type="HOGENOM" id="CLU_089169_4_0_1"/>
<dbReference type="InParanoid" id="Q9H9Z2"/>
<dbReference type="OMA" id="NEPQPLH"/>
<dbReference type="OrthoDB" id="422005at2759"/>
<dbReference type="PAN-GO" id="Q9H9Z2">
    <property type="GO annotations" value="4 GO annotations based on evolutionary models"/>
</dbReference>
<dbReference type="PhylomeDB" id="Q9H9Z2"/>
<dbReference type="TreeFam" id="TF316240"/>
<dbReference type="PathwayCommons" id="Q9H9Z2"/>
<dbReference type="Reactome" id="R-HSA-452723">
    <property type="pathway name" value="Transcriptional regulation of pluripotent stem cells"/>
</dbReference>
<dbReference type="SignaLink" id="Q9H9Z2"/>
<dbReference type="SIGNOR" id="Q9H9Z2"/>
<dbReference type="BioGRID-ORCS" id="79727">
    <property type="hits" value="23 hits in 1162 CRISPR screens"/>
</dbReference>
<dbReference type="CD-CODE" id="232F8A39">
    <property type="entry name" value="P-body"/>
</dbReference>
<dbReference type="CD-CODE" id="DEE660B4">
    <property type="entry name" value="Stress granule"/>
</dbReference>
<dbReference type="EvolutionaryTrace" id="Q9H9Z2"/>
<dbReference type="GeneWiki" id="LIN28"/>
<dbReference type="GenomeRNAi" id="79727"/>
<dbReference type="Pharos" id="Q9H9Z2">
    <property type="development level" value="Tbio"/>
</dbReference>
<dbReference type="PRO" id="PR:Q9H9Z2"/>
<dbReference type="Proteomes" id="UP000005640">
    <property type="component" value="Chromosome 1"/>
</dbReference>
<dbReference type="RNAct" id="Q9H9Z2">
    <property type="molecule type" value="protein"/>
</dbReference>
<dbReference type="Bgee" id="ENSG00000131914">
    <property type="expression patterns" value="Expressed in oocyte and 23 other cell types or tissues"/>
</dbReference>
<dbReference type="GO" id="GO:0005737">
    <property type="term" value="C:cytoplasm"/>
    <property type="evidence" value="ECO:0000314"/>
    <property type="project" value="UniProtKB"/>
</dbReference>
<dbReference type="GO" id="GO:0010494">
    <property type="term" value="C:cytoplasmic stress granule"/>
    <property type="evidence" value="ECO:0000314"/>
    <property type="project" value="UniProtKB"/>
</dbReference>
<dbReference type="GO" id="GO:0005829">
    <property type="term" value="C:cytosol"/>
    <property type="evidence" value="ECO:0000314"/>
    <property type="project" value="HPA"/>
</dbReference>
<dbReference type="GO" id="GO:0005730">
    <property type="term" value="C:nucleolus"/>
    <property type="evidence" value="ECO:0000314"/>
    <property type="project" value="HPA"/>
</dbReference>
<dbReference type="GO" id="GO:0005634">
    <property type="term" value="C:nucleus"/>
    <property type="evidence" value="ECO:0000314"/>
    <property type="project" value="UniProtKB"/>
</dbReference>
<dbReference type="GO" id="GO:0000932">
    <property type="term" value="C:P-body"/>
    <property type="evidence" value="ECO:0000314"/>
    <property type="project" value="UniProtKB"/>
</dbReference>
<dbReference type="GO" id="GO:0005791">
    <property type="term" value="C:rough endoplasmic reticulum"/>
    <property type="evidence" value="ECO:0000250"/>
    <property type="project" value="UniProtKB"/>
</dbReference>
<dbReference type="GO" id="GO:0002151">
    <property type="term" value="F:G-quadruplex RNA binding"/>
    <property type="evidence" value="ECO:0000250"/>
    <property type="project" value="UniProtKB"/>
</dbReference>
<dbReference type="GO" id="GO:0035198">
    <property type="term" value="F:miRNA binding"/>
    <property type="evidence" value="ECO:0000250"/>
    <property type="project" value="UniProtKB"/>
</dbReference>
<dbReference type="GO" id="GO:0003729">
    <property type="term" value="F:mRNA binding"/>
    <property type="evidence" value="ECO:0000314"/>
    <property type="project" value="UniProtKB"/>
</dbReference>
<dbReference type="GO" id="GO:0070883">
    <property type="term" value="F:pre-miRNA binding"/>
    <property type="evidence" value="ECO:0000314"/>
    <property type="project" value="UniProt"/>
</dbReference>
<dbReference type="GO" id="GO:0140517">
    <property type="term" value="F:protein-RNA adaptor activity"/>
    <property type="evidence" value="ECO:0000314"/>
    <property type="project" value="UniProtKB"/>
</dbReference>
<dbReference type="GO" id="GO:0003723">
    <property type="term" value="F:RNA binding"/>
    <property type="evidence" value="ECO:0000314"/>
    <property type="project" value="UniProtKB"/>
</dbReference>
<dbReference type="GO" id="GO:1990825">
    <property type="term" value="F:sequence-specific mRNA binding"/>
    <property type="evidence" value="ECO:0000250"/>
    <property type="project" value="UniProtKB"/>
</dbReference>
<dbReference type="GO" id="GO:0031369">
    <property type="term" value="F:translation initiation factor binding"/>
    <property type="evidence" value="ECO:0007669"/>
    <property type="project" value="Ensembl"/>
</dbReference>
<dbReference type="GO" id="GO:0008270">
    <property type="term" value="F:zinc ion binding"/>
    <property type="evidence" value="ECO:0007669"/>
    <property type="project" value="UniProtKB-KW"/>
</dbReference>
<dbReference type="GO" id="GO:0071333">
    <property type="term" value="P:cellular response to glucose stimulus"/>
    <property type="evidence" value="ECO:0000250"/>
    <property type="project" value="BHF-UCL"/>
</dbReference>
<dbReference type="GO" id="GO:0007281">
    <property type="term" value="P:germ cell development"/>
    <property type="evidence" value="ECO:0007669"/>
    <property type="project" value="Ensembl"/>
</dbReference>
<dbReference type="GO" id="GO:0010587">
    <property type="term" value="P:miRNA catabolic process"/>
    <property type="evidence" value="ECO:0000315"/>
    <property type="project" value="UniProtKB"/>
</dbReference>
<dbReference type="GO" id="GO:0045686">
    <property type="term" value="P:negative regulation of glial cell differentiation"/>
    <property type="evidence" value="ECO:0007669"/>
    <property type="project" value="Ensembl"/>
</dbReference>
<dbReference type="GO" id="GO:2000632">
    <property type="term" value="P:negative regulation of pre-miRNA processing"/>
    <property type="evidence" value="ECO:0000314"/>
    <property type="project" value="UniProt"/>
</dbReference>
<dbReference type="GO" id="GO:0017148">
    <property type="term" value="P:negative regulation of translation"/>
    <property type="evidence" value="ECO:0000250"/>
    <property type="project" value="UniProtKB"/>
</dbReference>
<dbReference type="GO" id="GO:1901724">
    <property type="term" value="P:positive regulation of cell proliferation involved in kidney development"/>
    <property type="evidence" value="ECO:0007669"/>
    <property type="project" value="Ensembl"/>
</dbReference>
<dbReference type="GO" id="GO:2000767">
    <property type="term" value="P:positive regulation of cytoplasmic translation"/>
    <property type="evidence" value="ECO:0000315"/>
    <property type="project" value="UniProtKB"/>
</dbReference>
<dbReference type="GO" id="GO:0045666">
    <property type="term" value="P:positive regulation of neuron differentiation"/>
    <property type="evidence" value="ECO:0007669"/>
    <property type="project" value="Ensembl"/>
</dbReference>
<dbReference type="GO" id="GO:0051897">
    <property type="term" value="P:positive regulation of phosphatidylinositol 3-kinase/protein kinase B signal transduction"/>
    <property type="evidence" value="ECO:0000250"/>
    <property type="project" value="BHF-UCL"/>
</dbReference>
<dbReference type="GO" id="GO:0032008">
    <property type="term" value="P:positive regulation of TOR signaling"/>
    <property type="evidence" value="ECO:0000250"/>
    <property type="project" value="BHF-UCL"/>
</dbReference>
<dbReference type="GO" id="GO:0031054">
    <property type="term" value="P:pre-miRNA processing"/>
    <property type="evidence" value="ECO:0000315"/>
    <property type="project" value="UniProtKB"/>
</dbReference>
<dbReference type="GO" id="GO:0031123">
    <property type="term" value="P:RNA 3'-end processing"/>
    <property type="evidence" value="ECO:0000315"/>
    <property type="project" value="UniProtKB"/>
</dbReference>
<dbReference type="GO" id="GO:0048863">
    <property type="term" value="P:stem cell differentiation"/>
    <property type="evidence" value="ECO:0007669"/>
    <property type="project" value="Ensembl"/>
</dbReference>
<dbReference type="GO" id="GO:0019827">
    <property type="term" value="P:stem cell population maintenance"/>
    <property type="evidence" value="ECO:0000315"/>
    <property type="project" value="UniProtKB"/>
</dbReference>
<dbReference type="CDD" id="cd04458">
    <property type="entry name" value="CSP_CDS"/>
    <property type="match status" value="1"/>
</dbReference>
<dbReference type="FunFam" id="4.10.60.10:FF:000007">
    <property type="entry name" value="Protein lin-28 homolog A"/>
    <property type="match status" value="1"/>
</dbReference>
<dbReference type="FunFam" id="2.40.50.140:FF:000087">
    <property type="entry name" value="Protein lin-28 homolog B"/>
    <property type="match status" value="1"/>
</dbReference>
<dbReference type="Gene3D" id="2.40.50.140">
    <property type="entry name" value="Nucleic acid-binding proteins"/>
    <property type="match status" value="1"/>
</dbReference>
<dbReference type="Gene3D" id="4.10.60.10">
    <property type="entry name" value="Zinc finger, CCHC-type"/>
    <property type="match status" value="1"/>
</dbReference>
<dbReference type="InterPro" id="IPR011129">
    <property type="entry name" value="CSD"/>
</dbReference>
<dbReference type="InterPro" id="IPR002059">
    <property type="entry name" value="CSP_DNA-bd"/>
</dbReference>
<dbReference type="InterPro" id="IPR051373">
    <property type="entry name" value="Lin-28_RNA-binding"/>
</dbReference>
<dbReference type="InterPro" id="IPR054081">
    <property type="entry name" value="Lin-28A-like_Znf-CCHC_2"/>
</dbReference>
<dbReference type="InterPro" id="IPR012340">
    <property type="entry name" value="NA-bd_OB-fold"/>
</dbReference>
<dbReference type="InterPro" id="IPR001878">
    <property type="entry name" value="Znf_CCHC"/>
</dbReference>
<dbReference type="InterPro" id="IPR036875">
    <property type="entry name" value="Znf_CCHC_sf"/>
</dbReference>
<dbReference type="PANTHER" id="PTHR46109">
    <property type="entry name" value="PROTEIN LIN-28"/>
    <property type="match status" value="1"/>
</dbReference>
<dbReference type="PANTHER" id="PTHR46109:SF2">
    <property type="entry name" value="PROTEIN LIN-28 HOMOLOG A"/>
    <property type="match status" value="1"/>
</dbReference>
<dbReference type="Pfam" id="PF00313">
    <property type="entry name" value="CSD"/>
    <property type="match status" value="1"/>
</dbReference>
<dbReference type="Pfam" id="PF21890">
    <property type="entry name" value="Lin-28A-like_zf-CCHC_2"/>
    <property type="match status" value="1"/>
</dbReference>
<dbReference type="Pfam" id="PF00098">
    <property type="entry name" value="zf-CCHC"/>
    <property type="match status" value="1"/>
</dbReference>
<dbReference type="PRINTS" id="PR00050">
    <property type="entry name" value="COLDSHOCK"/>
</dbReference>
<dbReference type="SMART" id="SM00357">
    <property type="entry name" value="CSP"/>
    <property type="match status" value="1"/>
</dbReference>
<dbReference type="SMART" id="SM00343">
    <property type="entry name" value="ZnF_C2HC"/>
    <property type="match status" value="2"/>
</dbReference>
<dbReference type="SUPFAM" id="SSF50249">
    <property type="entry name" value="Nucleic acid-binding proteins"/>
    <property type="match status" value="1"/>
</dbReference>
<dbReference type="SUPFAM" id="SSF57756">
    <property type="entry name" value="Retrovirus zinc finger-like domains"/>
    <property type="match status" value="1"/>
</dbReference>
<dbReference type="PROSITE" id="PS51857">
    <property type="entry name" value="CSD_2"/>
    <property type="match status" value="1"/>
</dbReference>
<dbReference type="PROSITE" id="PS50158">
    <property type="entry name" value="ZF_CCHC"/>
    <property type="match status" value="1"/>
</dbReference>
<keyword id="KW-0002">3D-structure</keyword>
<keyword id="KW-0007">Acetylation</keyword>
<keyword id="KW-0963">Cytoplasm</keyword>
<keyword id="KW-0256">Endoplasmic reticulum</keyword>
<keyword id="KW-0479">Metal-binding</keyword>
<keyword id="KW-0539">Nucleus</keyword>
<keyword id="KW-0597">Phosphoprotein</keyword>
<keyword id="KW-1267">Proteomics identification</keyword>
<keyword id="KW-1185">Reference proteome</keyword>
<keyword id="KW-0677">Repeat</keyword>
<keyword id="KW-0694">RNA-binding</keyword>
<keyword id="KW-0943">RNA-mediated gene silencing</keyword>
<keyword id="KW-0862">Zinc</keyword>
<keyword id="KW-0863">Zinc-finger</keyword>
<comment type="function">
    <text evidence="2 11 13 14 15 17 18">RNA-binding protein that inhibits processing of pre-let-7 miRNAs and regulates translation of mRNAs that control developmental timing, pluripotency and metabolism (PubMed:21247876). Seems to recognize a common structural G-quartet (G4) feature in its miRNA and mRNA targets (Probable). 'Translational enhancer' that drives specific mRNAs to polysomes and increases the efficiency of protein synthesis. Its association with the translational machinery and target mRNAs results in an increased number of initiation events per molecule of mRNA and, indirectly, in mRNA stabilization. Binds IGF2 mRNA, MYOD1 mRNA, ARBP/36B4 ribosomal protein mRNA and its own mRNA. Essential for skeletal muscle differentiation program through the translational up-regulation of IGF2 expression. Suppressor of microRNA (miRNA) biogenesis, including that of let-7, miR107, miR-143 and miR-200c. Specifically binds the miRNA precursors (pre-miRNAs), recognizing an 5'-GGAG-3' motif found in pre-miRNA terminal loop, and recruits TUT4 and TUT7 uridylyltransferases (PubMed:18951094, PubMed:19703396, PubMed:22118463, PubMed:22898984). This results in the terminal uridylation of target pre-miRNAs (PubMed:18951094, PubMed:19703396, PubMed:22118463, PubMed:22898984). Uridylated pre-miRNAs fail to be processed by Dicer and undergo degradation. The repression of let-7 expression is required for normal development and contributes to maintain the pluripotent state by preventing let-7-mediated differentiation of embryonic stem cells (PubMed:18951094, PubMed:19703396, PubMed:22118463, PubMed:22898984). Localized to the periendoplasmic reticulum area, binds to a large number of spliced mRNAs and inhibits the translation of mRNAs destined for the ER, reducing the synthesis of transmembrane proteins, ER or Golgi lumen proteins, and secretory proteins. Binds to and enhances the translation of mRNAs for several metabolic enzymes, such as PFKP, PDHA1 or SDHA, increasing glycolysis and oxidative phosphorylation. Which, with the let-7 repression may enhance tissue repair in adult tissue (By similarity).</text>
</comment>
<comment type="subunit">
    <text evidence="1 2 13 14 15 16">Monomer (By similarity). During skeletal muscle differentiation, associated with translation initiation complexes in the polysomal compartment (PubMed:21247876). Directly interacts with EIF3S2 (By similarity). Interacts with NCL in an RNA-dependent manner (By similarity). Interacts (via C-terminus) with DHX9 (via N- and C-terminus); this interaction occurs in a RNA-independent manner (PubMed:21247876). Interacts with TUT4 in the presence of pre-let-7 RNA (PubMed:19703396, PubMed:22118463).</text>
</comment>
<comment type="interaction">
    <interactant intactId="EBI-2462365">
        <id>Q9H9Z2</id>
    </interactant>
    <interactant intactId="EBI-466029">
        <id>P42858</id>
        <label>HTT</label>
    </interactant>
    <organismsDiffer>false</organismsDiffer>
    <experiments>18</experiments>
</comment>
<comment type="interaction">
    <interactant intactId="EBI-2462365">
        <id>Q9H9Z2</id>
    </interactant>
    <interactant intactId="EBI-17263125">
        <id>Q9NSD4</id>
        <label>ZNF275</label>
    </interactant>
    <organismsDiffer>false</organismsDiffer>
    <experiments>3</experiments>
</comment>
<comment type="subcellular location">
    <subcellularLocation>
        <location evidence="11 15">Cytoplasm</location>
    </subcellularLocation>
    <subcellularLocation>
        <location evidence="2">Rough endoplasmic reticulum</location>
    </subcellularLocation>
    <subcellularLocation>
        <location evidence="10">Cytoplasm</location>
        <location evidence="10">P-body</location>
    </subcellularLocation>
    <subcellularLocation>
        <location evidence="10">Cytoplasm</location>
        <location evidence="10">Stress granule</location>
    </subcellularLocation>
    <subcellularLocation>
        <location evidence="2">Nucleus</location>
        <location evidence="2">Nucleolus</location>
    </subcellularLocation>
    <text evidence="2 10 15">Predominantly cytoplasmic (PubMed:22118463). In the cytoplasm, localizes to peri-endoplasmic reticulum regions and detected in the microsomal fraction derived from rough endoplasmic reticulum (RER) following subcellular fractionation. May be bound to the cytosolic surface of RER on which ER-associated mRNAs are translated (By similarity). Shuttle from the nucleus to the cytoplasm requires RNA-binding (PubMed:17617744). Nucleolar localization is observed in 10-15% of the nuclei in differentiated myotubes (By similarity).</text>
</comment>
<comment type="tissue specificity">
    <text evidence="5 7 8 15">Expressed in embryonic stem cells, placenta and testis. Tends to be up-regulated in HER2-overexpressing breast tumors.</text>
</comment>
<comment type="developmental stage">
    <text evidence="5 7 8">Expressed in fetal liver. Expression decreases during differentiation of ES cells or upon induction of neuronal differentiation by retinoic acid.</text>
</comment>
<comment type="induction">
    <text evidence="6 9">Can be negatively regulated by the interaction of microRNAs miR-125a and miR-125b with at least two miRNA responsive elements (miREs) in the 3'-UTR of this gene. These interactions may reduce both translation efficiency and mRNA abundance. Negatively regulated by retinoic acid.</text>
</comment>
<comment type="domain">
    <text evidence="2">The CSD domain is required for function in muscle differentiation.</text>
</comment>
<comment type="domain">
    <text evidence="2">The CCHC zinc fingers interact with the GGAG motif at the 3' end of let-7 miRNAs precursors, more generally they bind the 5'-NGNNG-3' consensus motif with micromolar affinity. The CSD domain recognizes the loop at the 5' end. The flexible linker allows accommodating variable sequences and lengths among let-7 family members.</text>
</comment>
<comment type="miscellaneous">
    <text evidence="12">Overexpressed in primary tumors (overall frequency approximately 15%), overexpression being linked to repression of let-7 family miRNAs and derepression of let-7 targets. Facilitates cellular transformation in vitro, and overexpression is associated with advanced disease across multiple tumor types.</text>
</comment>
<comment type="miscellaneous">
    <text evidence="2">Reactivation of LIN28A expression enhances tissue repair in some adult tissues by reprogramming cellular bioenergetics. Improves hair regrowth by promoting anagen in hair follicle and accelerates regrowth of cartilage, bone and mesenchyme after ear and digit injuries.</text>
</comment>
<comment type="similarity">
    <text evidence="18">Belongs to the lin-28 family.</text>
</comment>
<accession>Q9H9Z2</accession>
<reference key="1">
    <citation type="journal article" date="2003" name="Dev. Biol.">
        <title>Conservation of the heterochronic regulator Lin-28, its developmental expression and microRNA complementary sites.</title>
        <authorList>
            <person name="Moss E.G."/>
            <person name="Tang L."/>
        </authorList>
    </citation>
    <scope>NUCLEOTIDE SEQUENCE [MRNA]</scope>
</reference>
<reference key="2">
    <citation type="journal article" date="2003" name="Dev. Biol.">
        <authorList>
            <person name="Moss E.G."/>
            <person name="Tang L."/>
        </authorList>
    </citation>
    <scope>ERRATUM OF PUBMED:12798299</scope>
</reference>
<reference key="3">
    <citation type="journal article" date="2004" name="Nat. Genet.">
        <title>Complete sequencing and characterization of 21,243 full-length human cDNAs.</title>
        <authorList>
            <person name="Ota T."/>
            <person name="Suzuki Y."/>
            <person name="Nishikawa T."/>
            <person name="Otsuki T."/>
            <person name="Sugiyama T."/>
            <person name="Irie R."/>
            <person name="Wakamatsu A."/>
            <person name="Hayashi K."/>
            <person name="Sato H."/>
            <person name="Nagai K."/>
            <person name="Kimura K."/>
            <person name="Makita H."/>
            <person name="Sekine M."/>
            <person name="Obayashi M."/>
            <person name="Nishi T."/>
            <person name="Shibahara T."/>
            <person name="Tanaka T."/>
            <person name="Ishii S."/>
            <person name="Yamamoto J."/>
            <person name="Saito K."/>
            <person name="Kawai Y."/>
            <person name="Isono Y."/>
            <person name="Nakamura Y."/>
            <person name="Nagahari K."/>
            <person name="Murakami K."/>
            <person name="Yasuda T."/>
            <person name="Iwayanagi T."/>
            <person name="Wagatsuma M."/>
            <person name="Shiratori A."/>
            <person name="Sudo H."/>
            <person name="Hosoiri T."/>
            <person name="Kaku Y."/>
            <person name="Kodaira H."/>
            <person name="Kondo H."/>
            <person name="Sugawara M."/>
            <person name="Takahashi M."/>
            <person name="Kanda K."/>
            <person name="Yokoi T."/>
            <person name="Furuya T."/>
            <person name="Kikkawa E."/>
            <person name="Omura Y."/>
            <person name="Abe K."/>
            <person name="Kamihara K."/>
            <person name="Katsuta N."/>
            <person name="Sato K."/>
            <person name="Tanikawa M."/>
            <person name="Yamazaki M."/>
            <person name="Ninomiya K."/>
            <person name="Ishibashi T."/>
            <person name="Yamashita H."/>
            <person name="Murakawa K."/>
            <person name="Fujimori K."/>
            <person name="Tanai H."/>
            <person name="Kimata M."/>
            <person name="Watanabe M."/>
            <person name="Hiraoka S."/>
            <person name="Chiba Y."/>
            <person name="Ishida S."/>
            <person name="Ono Y."/>
            <person name="Takiguchi S."/>
            <person name="Watanabe S."/>
            <person name="Yosida M."/>
            <person name="Hotuta T."/>
            <person name="Kusano J."/>
            <person name="Kanehori K."/>
            <person name="Takahashi-Fujii A."/>
            <person name="Hara H."/>
            <person name="Tanase T.-O."/>
            <person name="Nomura Y."/>
            <person name="Togiya S."/>
            <person name="Komai F."/>
            <person name="Hara R."/>
            <person name="Takeuchi K."/>
            <person name="Arita M."/>
            <person name="Imose N."/>
            <person name="Musashino K."/>
            <person name="Yuuki H."/>
            <person name="Oshima A."/>
            <person name="Sasaki N."/>
            <person name="Aotsuka S."/>
            <person name="Yoshikawa Y."/>
            <person name="Matsunawa H."/>
            <person name="Ichihara T."/>
            <person name="Shiohata N."/>
            <person name="Sano S."/>
            <person name="Moriya S."/>
            <person name="Momiyama H."/>
            <person name="Satoh N."/>
            <person name="Takami S."/>
            <person name="Terashima Y."/>
            <person name="Suzuki O."/>
            <person name="Nakagawa S."/>
            <person name="Senoh A."/>
            <person name="Mizoguchi H."/>
            <person name="Goto Y."/>
            <person name="Shimizu F."/>
            <person name="Wakebe H."/>
            <person name="Hishigaki H."/>
            <person name="Watanabe T."/>
            <person name="Sugiyama A."/>
            <person name="Takemoto M."/>
            <person name="Kawakami B."/>
            <person name="Yamazaki M."/>
            <person name="Watanabe K."/>
            <person name="Kumagai A."/>
            <person name="Itakura S."/>
            <person name="Fukuzumi Y."/>
            <person name="Fujimori Y."/>
            <person name="Komiyama M."/>
            <person name="Tashiro H."/>
            <person name="Tanigami A."/>
            <person name="Fujiwara T."/>
            <person name="Ono T."/>
            <person name="Yamada K."/>
            <person name="Fujii Y."/>
            <person name="Ozaki K."/>
            <person name="Hirao M."/>
            <person name="Ohmori Y."/>
            <person name="Kawabata A."/>
            <person name="Hikiji T."/>
            <person name="Kobatake N."/>
            <person name="Inagaki H."/>
            <person name="Ikema Y."/>
            <person name="Okamoto S."/>
            <person name="Okitani R."/>
            <person name="Kawakami T."/>
            <person name="Noguchi S."/>
            <person name="Itoh T."/>
            <person name="Shigeta K."/>
            <person name="Senba T."/>
            <person name="Matsumura K."/>
            <person name="Nakajima Y."/>
            <person name="Mizuno T."/>
            <person name="Morinaga M."/>
            <person name="Sasaki M."/>
            <person name="Togashi T."/>
            <person name="Oyama M."/>
            <person name="Hata H."/>
            <person name="Watanabe M."/>
            <person name="Komatsu T."/>
            <person name="Mizushima-Sugano J."/>
            <person name="Satoh T."/>
            <person name="Shirai Y."/>
            <person name="Takahashi Y."/>
            <person name="Nakagawa K."/>
            <person name="Okumura K."/>
            <person name="Nagase T."/>
            <person name="Nomura N."/>
            <person name="Kikuchi H."/>
            <person name="Masuho Y."/>
            <person name="Yamashita R."/>
            <person name="Nakai K."/>
            <person name="Yada T."/>
            <person name="Nakamura Y."/>
            <person name="Ohara O."/>
            <person name="Isogai T."/>
            <person name="Sugano S."/>
        </authorList>
    </citation>
    <scope>NUCLEOTIDE SEQUENCE [LARGE SCALE MRNA]</scope>
    <source>
        <tissue>Teratocarcinoma</tissue>
    </source>
</reference>
<reference key="4">
    <citation type="journal article" date="2006" name="Nature">
        <title>The DNA sequence and biological annotation of human chromosome 1.</title>
        <authorList>
            <person name="Gregory S.G."/>
            <person name="Barlow K.F."/>
            <person name="McLay K.E."/>
            <person name="Kaul R."/>
            <person name="Swarbreck D."/>
            <person name="Dunham A."/>
            <person name="Scott C.E."/>
            <person name="Howe K.L."/>
            <person name="Woodfine K."/>
            <person name="Spencer C.C.A."/>
            <person name="Jones M.C."/>
            <person name="Gillson C."/>
            <person name="Searle S."/>
            <person name="Zhou Y."/>
            <person name="Kokocinski F."/>
            <person name="McDonald L."/>
            <person name="Evans R."/>
            <person name="Phillips K."/>
            <person name="Atkinson A."/>
            <person name="Cooper R."/>
            <person name="Jones C."/>
            <person name="Hall R.E."/>
            <person name="Andrews T.D."/>
            <person name="Lloyd C."/>
            <person name="Ainscough R."/>
            <person name="Almeida J.P."/>
            <person name="Ambrose K.D."/>
            <person name="Anderson F."/>
            <person name="Andrew R.W."/>
            <person name="Ashwell R.I.S."/>
            <person name="Aubin K."/>
            <person name="Babbage A.K."/>
            <person name="Bagguley C.L."/>
            <person name="Bailey J."/>
            <person name="Beasley H."/>
            <person name="Bethel G."/>
            <person name="Bird C.P."/>
            <person name="Bray-Allen S."/>
            <person name="Brown J.Y."/>
            <person name="Brown A.J."/>
            <person name="Buckley D."/>
            <person name="Burton J."/>
            <person name="Bye J."/>
            <person name="Carder C."/>
            <person name="Chapman J.C."/>
            <person name="Clark S.Y."/>
            <person name="Clarke G."/>
            <person name="Clee C."/>
            <person name="Cobley V."/>
            <person name="Collier R.E."/>
            <person name="Corby N."/>
            <person name="Coville G.J."/>
            <person name="Davies J."/>
            <person name="Deadman R."/>
            <person name="Dunn M."/>
            <person name="Earthrowl M."/>
            <person name="Ellington A.G."/>
            <person name="Errington H."/>
            <person name="Frankish A."/>
            <person name="Frankland J."/>
            <person name="French L."/>
            <person name="Garner P."/>
            <person name="Garnett J."/>
            <person name="Gay L."/>
            <person name="Ghori M.R.J."/>
            <person name="Gibson R."/>
            <person name="Gilby L.M."/>
            <person name="Gillett W."/>
            <person name="Glithero R.J."/>
            <person name="Grafham D.V."/>
            <person name="Griffiths C."/>
            <person name="Griffiths-Jones S."/>
            <person name="Grocock R."/>
            <person name="Hammond S."/>
            <person name="Harrison E.S.I."/>
            <person name="Hart E."/>
            <person name="Haugen E."/>
            <person name="Heath P.D."/>
            <person name="Holmes S."/>
            <person name="Holt K."/>
            <person name="Howden P.J."/>
            <person name="Hunt A.R."/>
            <person name="Hunt S.E."/>
            <person name="Hunter G."/>
            <person name="Isherwood J."/>
            <person name="James R."/>
            <person name="Johnson C."/>
            <person name="Johnson D."/>
            <person name="Joy A."/>
            <person name="Kay M."/>
            <person name="Kershaw J.K."/>
            <person name="Kibukawa M."/>
            <person name="Kimberley A.M."/>
            <person name="King A."/>
            <person name="Knights A.J."/>
            <person name="Lad H."/>
            <person name="Laird G."/>
            <person name="Lawlor S."/>
            <person name="Leongamornlert D.A."/>
            <person name="Lloyd D.M."/>
            <person name="Loveland J."/>
            <person name="Lovell J."/>
            <person name="Lush M.J."/>
            <person name="Lyne R."/>
            <person name="Martin S."/>
            <person name="Mashreghi-Mohammadi M."/>
            <person name="Matthews L."/>
            <person name="Matthews N.S.W."/>
            <person name="McLaren S."/>
            <person name="Milne S."/>
            <person name="Mistry S."/>
            <person name="Moore M.J.F."/>
            <person name="Nickerson T."/>
            <person name="O'Dell C.N."/>
            <person name="Oliver K."/>
            <person name="Palmeiri A."/>
            <person name="Palmer S.A."/>
            <person name="Parker A."/>
            <person name="Patel D."/>
            <person name="Pearce A.V."/>
            <person name="Peck A.I."/>
            <person name="Pelan S."/>
            <person name="Phelps K."/>
            <person name="Phillimore B.J."/>
            <person name="Plumb R."/>
            <person name="Rajan J."/>
            <person name="Raymond C."/>
            <person name="Rouse G."/>
            <person name="Saenphimmachak C."/>
            <person name="Sehra H.K."/>
            <person name="Sheridan E."/>
            <person name="Shownkeen R."/>
            <person name="Sims S."/>
            <person name="Skuce C.D."/>
            <person name="Smith M."/>
            <person name="Steward C."/>
            <person name="Subramanian S."/>
            <person name="Sycamore N."/>
            <person name="Tracey A."/>
            <person name="Tromans A."/>
            <person name="Van Helmond Z."/>
            <person name="Wall M."/>
            <person name="Wallis J.M."/>
            <person name="White S."/>
            <person name="Whitehead S.L."/>
            <person name="Wilkinson J.E."/>
            <person name="Willey D.L."/>
            <person name="Williams H."/>
            <person name="Wilming L."/>
            <person name="Wray P.W."/>
            <person name="Wu Z."/>
            <person name="Coulson A."/>
            <person name="Vaudin M."/>
            <person name="Sulston J.E."/>
            <person name="Durbin R.M."/>
            <person name="Hubbard T."/>
            <person name="Wooster R."/>
            <person name="Dunham I."/>
            <person name="Carter N.P."/>
            <person name="McVean G."/>
            <person name="Ross M.T."/>
            <person name="Harrow J."/>
            <person name="Olson M.V."/>
            <person name="Beck S."/>
            <person name="Rogers J."/>
            <person name="Bentley D.R."/>
        </authorList>
    </citation>
    <scope>NUCLEOTIDE SEQUENCE [LARGE SCALE GENOMIC DNA]</scope>
</reference>
<reference key="5">
    <citation type="journal article" date="2004" name="Genome Res.">
        <title>The status, quality, and expansion of the NIH full-length cDNA project: the Mammalian Gene Collection (MGC).</title>
        <authorList>
            <consortium name="The MGC Project Team"/>
        </authorList>
    </citation>
    <scope>NUCLEOTIDE SEQUENCE [LARGE SCALE MRNA]</scope>
    <source>
        <tissue>Placenta</tissue>
    </source>
</reference>
<reference key="6">
    <citation type="journal article" date="2004" name="Genome Biol.">
        <title>Expression profiling of mammalian microRNAs uncovers a subset of brain-expressed microRNAs with possible roles in murine and human neuronal differentiation.</title>
        <authorList>
            <person name="Sempere L.F."/>
            <person name="Freemantle S."/>
            <person name="Pitha-Rowe I."/>
            <person name="Moss E.G."/>
            <person name="Dmitrovsky E."/>
            <person name="Ambros V."/>
        </authorList>
    </citation>
    <scope>INDUCTION</scope>
</reference>
<reference key="7">
    <citation type="journal article" date="2004" name="Stem Cells">
        <title>The transcriptome profile of human embryonic stem cells as defined by SAGE.</title>
        <authorList>
            <person name="Richards M."/>
            <person name="Tan S.-P."/>
            <person name="Tan J.-H."/>
            <person name="Chan W.-K."/>
            <person name="Bongso A."/>
        </authorList>
    </citation>
    <scope>TISSUE SPECIFICITY</scope>
    <scope>DEVELOPMENTAL STAGE</scope>
</reference>
<reference key="8">
    <citation type="journal article" date="2005" name="Dev. Dyn.">
        <title>Vascular gene expression and phenotypic correlation during differentiation of human embryonic stem cells.</title>
        <authorList>
            <person name="Gerecht-Nir S."/>
            <person name="Dazard J.-E."/>
            <person name="Golan-Mashiach M."/>
            <person name="Osenberg S."/>
            <person name="Botvinnik A."/>
            <person name="Amariglio N."/>
            <person name="Domany E."/>
            <person name="Rechavi G."/>
            <person name="Givol D."/>
            <person name="Itskovitz-Eldor J."/>
        </authorList>
    </citation>
    <scope>TISSUE SPECIFICITY</scope>
    <scope>DEVELOPMENTAL STAGE</scope>
</reference>
<reference key="9">
    <citation type="journal article" date="2005" name="J. Biol. Chem.">
        <title>Depletion of human micro-RNA miR-125b reveals that it is critical for the proliferation of differentiated cells but not for the down-regulation of putative targets during differentiation.</title>
        <authorList>
            <person name="Lee Y.S."/>
            <person name="Kim H.K."/>
            <person name="Chung S."/>
            <person name="Kim K.-S."/>
            <person name="Dutta A."/>
        </authorList>
    </citation>
    <scope>TISSUE SPECIFICITY</scope>
    <scope>DEVELOPMENTAL STAGE</scope>
</reference>
<reference key="10">
    <citation type="journal article" date="2005" name="Mol. Cell. Biol.">
        <title>Micro-RNA regulation of the mammalian lin-28 gene during neuronal differentiation of embryonal carcinoma cells.</title>
        <authorList>
            <person name="Wu L."/>
            <person name="Belasco J.G."/>
        </authorList>
    </citation>
    <scope>INDUCTION</scope>
</reference>
<reference key="11">
    <citation type="journal article" date="2007" name="RNA Biol.">
        <title>Localization of the developmental timing regulator Lin28 to mRNP complexes, P-bodies and stress granules.</title>
        <authorList>
            <person name="Balzer E."/>
            <person name="Moss E.G."/>
        </authorList>
    </citation>
    <scope>SUBCELLULAR LOCATION</scope>
    <scope>MUTAGENESIS OF TRP-46; PHE-55; PHE-73; HIS-147 AND HIS-169</scope>
</reference>
<reference key="12">
    <citation type="journal article" date="2008" name="Mol. Cell">
        <title>Lin28 mediates the terminal uridylation of let-7 precursor MicroRNA.</title>
        <authorList>
            <person name="Heo I."/>
            <person name="Joo C."/>
            <person name="Cho J."/>
            <person name="Ha M."/>
            <person name="Han J."/>
            <person name="Kim V.N."/>
        </authorList>
    </citation>
    <scope>FUNCTION</scope>
    <scope>SUBCELLULAR LOCATION</scope>
    <scope>RNA-BINDING</scope>
    <scope>MUTAGENESIS OF HIS-147 AND HIS-169</scope>
</reference>
<reference key="13">
    <citation type="journal article" date="2009" name="Cell">
        <title>TUT4 in concert with Lin28 suppresses MicroRNA biogenesis through pre-microRNA uridylation.</title>
        <authorList>
            <person name="Heo I."/>
            <person name="Joo C."/>
            <person name="Kim Y.-K."/>
            <person name="Ha M."/>
            <person name="Yoon M.-J."/>
            <person name="Cho J."/>
            <person name="Yeom K.-H."/>
            <person name="Han J."/>
            <person name="Kim V.N."/>
        </authorList>
    </citation>
    <scope>FUNCTION IN PRE-MIRNA URIDYLATION</scope>
    <scope>RNA-BINDING</scope>
    <scope>INTERACTION WITH ZCCHC11</scope>
</reference>
<reference key="14">
    <citation type="journal article" date="2009" name="Nat. Genet.">
        <title>Lin28 promotes transformation and is associated with advanced human malignancies.</title>
        <authorList>
            <person name="Viswanathan S.R."/>
            <person name="Powers J.T."/>
            <person name="Einhorn W."/>
            <person name="Hoshida Y."/>
            <person name="Ng T.L."/>
            <person name="Toffanin S."/>
            <person name="O'Sullivan M."/>
            <person name="Lu J."/>
            <person name="Phillips L.A."/>
            <person name="Lockhart V.L."/>
            <person name="Shah S.P."/>
            <person name="Tanwar P.S."/>
            <person name="Mermel C.H."/>
            <person name="Beroukhim R."/>
            <person name="Azam M."/>
            <person name="Teixeira J."/>
            <person name="Meyerson M."/>
            <person name="Hughes T.P."/>
            <person name="Llovet J.M."/>
            <person name="Radich J."/>
            <person name="Mullighan C.G."/>
            <person name="Golub T.R."/>
            <person name="Sorensen P.H."/>
            <person name="Daley G.Q."/>
        </authorList>
    </citation>
    <scope>POSSIBLE INVOLVEMENT IN CANCERS</scope>
</reference>
<reference key="15">
    <citation type="journal article" date="2011" name="Cell">
        <title>Lin28A and Lin28B inhibit let-7 microRNA biogenesis by distinct mechanisms.</title>
        <authorList>
            <person name="Piskounova E."/>
            <person name="Polytarchou C."/>
            <person name="Thornton J.E."/>
            <person name="LaPierre R.J."/>
            <person name="Pothoulakis C."/>
            <person name="Hagan J.P."/>
            <person name="Iliopoulos D."/>
            <person name="Gregory R.I."/>
        </authorList>
    </citation>
    <scope>FUNCTION IN PRE-LET-7 URIDYLATION</scope>
    <scope>INTERACTION WITH ZCCHC11</scope>
    <scope>SUBCELLULAR LOCATION</scope>
    <scope>TISSUE SPECIFICITY</scope>
</reference>
<reference key="16">
    <citation type="journal article" date="2011" name="Nucleic Acids Res.">
        <title>Evidence that Lin28 stimulates translation by recruiting RNA helicase A to polysomes.</title>
        <authorList>
            <person name="Jin J."/>
            <person name="Jing W."/>
            <person name="Lei X.X."/>
            <person name="Feng C."/>
            <person name="Peng S."/>
            <person name="Boris-Lawrie K."/>
            <person name="Huang Y."/>
        </authorList>
    </citation>
    <scope>FUNCTION IN MRNA TRANSLATION</scope>
    <scope>INTERACTION WITH DHX9</scope>
</reference>
<reference key="17">
    <citation type="journal article" date="2011" name="Sci. Signal.">
        <title>System-wide temporal characterization of the proteome and phosphoproteome of human embryonic stem cell differentiation.</title>
        <authorList>
            <person name="Rigbolt K.T."/>
            <person name="Prokhorova T.A."/>
            <person name="Akimov V."/>
            <person name="Henningsen J."/>
            <person name="Johansen P.T."/>
            <person name="Kratchmarova I."/>
            <person name="Kassem M."/>
            <person name="Mann M."/>
            <person name="Olsen J.V."/>
            <person name="Blagoev B."/>
        </authorList>
    </citation>
    <scope>ACETYLATION [LARGE SCALE ANALYSIS] AT GLY-2</scope>
    <scope>PHOSPHORYLATION [LARGE SCALE ANALYSIS] AT SER-3; SER-120 AND SER-200</scope>
    <scope>CLEAVAGE OF INITIATOR METHIONINE [LARGE SCALE ANALYSIS]</scope>
    <scope>IDENTIFICATION BY MASS SPECTROMETRY [LARGE SCALE ANALYSIS]</scope>
</reference>
<reference key="18">
    <citation type="journal article" date="2012" name="Mol. Cell. Proteomics">
        <title>Comparative large-scale characterisation of plant vs. mammal proteins reveals similar and idiosyncratic N-alpha acetylation features.</title>
        <authorList>
            <person name="Bienvenut W.V."/>
            <person name="Sumpton D."/>
            <person name="Martinez A."/>
            <person name="Lilla S."/>
            <person name="Espagne C."/>
            <person name="Meinnel T."/>
            <person name="Giglione C."/>
        </authorList>
    </citation>
    <scope>ACETYLATION [LARGE SCALE ANALYSIS] AT GLY-2</scope>
    <scope>CLEAVAGE OF INITIATOR METHIONINE [LARGE SCALE ANALYSIS]</scope>
    <scope>IDENTIFICATION BY MASS SPECTROMETRY [LARGE SCALE ANALYSIS]</scope>
</reference>
<reference key="19">
    <citation type="journal article" date="2012" name="RNA">
        <title>Lin28-mediated control of let-7 microRNA expression by alternative TUTases Zcchc11 (TUT4) and Zcchc6 (TUT7).</title>
        <authorList>
            <person name="Thornton J.E."/>
            <person name="Chang H.M."/>
            <person name="Piskounova E."/>
            <person name="Gregory R.I."/>
        </authorList>
    </citation>
    <scope>FUNCTION IN PRE-LET-7 URIDYLATION</scope>
</reference>
<reference key="20">
    <citation type="submission" date="2005-11" db="PDB data bank">
        <title>Solution structure of the zinc-finger domain in LIN-28.</title>
        <authorList>
            <consortium name="RIKEN structural genomics initiative (RSGI)"/>
        </authorList>
    </citation>
    <scope>STRUCTURE BY NMR OF 134-186</scope>
</reference>
<reference key="21">
    <citation type="journal article" date="2012" name="Nat. Struct. Mol. Biol.">
        <title>Structural basis of pre-let-7 miRNA recognition by the zinc knuckles of pluripotency factor Lin28.</title>
        <authorList>
            <person name="Loughlin F.E."/>
            <person name="Gebert L.F."/>
            <person name="Towbin H."/>
            <person name="Brunschweiger A."/>
            <person name="Hall J."/>
            <person name="Allain F.H."/>
        </authorList>
    </citation>
    <scope>STRUCTURE BY NMR OF 124-186 IN COMPLEX WITH SHORT RNA</scope>
    <scope>CONSENSUS MOTIF</scope>
</reference>
<organism>
    <name type="scientific">Homo sapiens</name>
    <name type="common">Human</name>
    <dbReference type="NCBI Taxonomy" id="9606"/>
    <lineage>
        <taxon>Eukaryota</taxon>
        <taxon>Metazoa</taxon>
        <taxon>Chordata</taxon>
        <taxon>Craniata</taxon>
        <taxon>Vertebrata</taxon>
        <taxon>Euteleostomi</taxon>
        <taxon>Mammalia</taxon>
        <taxon>Eutheria</taxon>
        <taxon>Euarchontoglires</taxon>
        <taxon>Primates</taxon>
        <taxon>Haplorrhini</taxon>
        <taxon>Catarrhini</taxon>
        <taxon>Hominidae</taxon>
        <taxon>Homo</taxon>
    </lineage>
</organism>
<name>LN28A_HUMAN</name>
<proteinExistence type="evidence at protein level"/>
<protein>
    <recommendedName>
        <fullName>Protein lin-28 homolog A</fullName>
        <shortName>Lin-28A</shortName>
    </recommendedName>
    <alternativeName>
        <fullName>Zinc finger CCHC domain-containing protein 1</fullName>
    </alternativeName>
</protein>
<evidence type="ECO:0000250" key="1"/>
<evidence type="ECO:0000250" key="2">
    <source>
        <dbReference type="UniProtKB" id="Q8K3Y3"/>
    </source>
</evidence>
<evidence type="ECO:0000255" key="3">
    <source>
        <dbReference type="PROSITE-ProRule" id="PRU00047"/>
    </source>
</evidence>
<evidence type="ECO:0000256" key="4">
    <source>
        <dbReference type="SAM" id="MobiDB-lite"/>
    </source>
</evidence>
<evidence type="ECO:0000269" key="5">
    <source>
    </source>
</evidence>
<evidence type="ECO:0000269" key="6">
    <source>
    </source>
</evidence>
<evidence type="ECO:0000269" key="7">
    <source>
    </source>
</evidence>
<evidence type="ECO:0000269" key="8">
    <source>
    </source>
</evidence>
<evidence type="ECO:0000269" key="9">
    <source>
    </source>
</evidence>
<evidence type="ECO:0000269" key="10">
    <source>
    </source>
</evidence>
<evidence type="ECO:0000269" key="11">
    <source>
    </source>
</evidence>
<evidence type="ECO:0000269" key="12">
    <source>
    </source>
</evidence>
<evidence type="ECO:0000269" key="13">
    <source>
    </source>
</evidence>
<evidence type="ECO:0000269" key="14">
    <source>
    </source>
</evidence>
<evidence type="ECO:0000269" key="15">
    <source>
    </source>
</evidence>
<evidence type="ECO:0000269" key="16">
    <source>
    </source>
</evidence>
<evidence type="ECO:0000269" key="17">
    <source>
    </source>
</evidence>
<evidence type="ECO:0000305" key="18"/>
<evidence type="ECO:0007744" key="19">
    <source>
    </source>
</evidence>
<evidence type="ECO:0007744" key="20">
    <source>
    </source>
</evidence>
<evidence type="ECO:0007829" key="21">
    <source>
        <dbReference type="PDB" id="2CQF"/>
    </source>
</evidence>
<evidence type="ECO:0007829" key="22">
    <source>
        <dbReference type="PDB" id="5UDZ"/>
    </source>
</evidence>
<sequence>MGSVSNQQFAGGCAKAAEEAPEEAPEDAARAADEPQLLHGAGICKWFNVRMGFGFLSMTARAGVALDPPVDVFVHQSKLHMEGFRSLKEGEAVEFTFKKSAKGLESIRVTGPGGVFCIGSERRPKGKSMQKRRSKGDRCYNCGGLDHHAKECKLPPQPKKCHFCQSISHMVASCPLKAQQGPSAQGKPTYFREEEEEIHSPTLLPEAQN</sequence>
<gene>
    <name type="primary">LIN28A</name>
    <name type="synonym">CSDD1</name>
    <name type="synonym">LIN28</name>
    <name type="synonym">ZCCHC1</name>
</gene>
<feature type="initiator methionine" description="Removed" evidence="19 20">
    <location>
        <position position="1"/>
    </location>
</feature>
<feature type="chain" id="PRO_0000253787" description="Protein lin-28 homolog A">
    <location>
        <begin position="2"/>
        <end position="209"/>
    </location>
</feature>
<feature type="domain" description="CSD">
    <location>
        <begin position="39"/>
        <end position="112"/>
    </location>
</feature>
<feature type="zinc finger region" description="CCHC-type 1" evidence="3">
    <location>
        <begin position="137"/>
        <end position="154"/>
    </location>
</feature>
<feature type="zinc finger region" description="CCHC-type 2" evidence="3">
    <location>
        <begin position="159"/>
        <end position="176"/>
    </location>
</feature>
<feature type="region of interest" description="Disordered" evidence="4">
    <location>
        <begin position="1"/>
        <end position="31"/>
    </location>
</feature>
<feature type="region of interest" description="Flexible linker">
    <location>
        <begin position="113"/>
        <end position="136"/>
    </location>
</feature>
<feature type="region of interest" description="Disordered" evidence="4">
    <location>
        <begin position="178"/>
        <end position="209"/>
    </location>
</feature>
<feature type="modified residue" description="N-acetylglycine" evidence="19 20">
    <location>
        <position position="2"/>
    </location>
</feature>
<feature type="modified residue" description="Phosphoserine" evidence="19">
    <location>
        <position position="3"/>
    </location>
</feature>
<feature type="modified residue" description="Phosphoserine" evidence="19">
    <location>
        <position position="120"/>
    </location>
</feature>
<feature type="modified residue" description="Phosphoserine" evidence="19">
    <location>
        <position position="200"/>
    </location>
</feature>
<feature type="mutagenesis site" description="Does not affect localization to P-bodies; when associated with A-55 and A-73." evidence="10">
    <original>W</original>
    <variation>A</variation>
    <location>
        <position position="46"/>
    </location>
</feature>
<feature type="mutagenesis site" description="Does not affect localization to P-bodies; when associated with A-46 and A-73." evidence="10">
    <original>F</original>
    <variation>A</variation>
    <location>
        <position position="55"/>
    </location>
</feature>
<feature type="mutagenesis site" description="Does not affect localization to P-bodies; when associated with A-46 and A-55." evidence="10">
    <original>F</original>
    <variation>A</variation>
    <location>
        <position position="73"/>
    </location>
</feature>
<feature type="mutagenesis site" description="Abolishes ability to suppress pre-let-7 biogenesis and localization to P-bodies without affecting pre-let-7 binding; when associated with A-169." evidence="10 11">
    <original>H</original>
    <variation>A</variation>
    <location>
        <position position="147"/>
    </location>
</feature>
<feature type="mutagenesis site" description="Abolishes ability to suppress pre-let-7 biogenesis and localization to P-bodies without affecting pre-let-7 binding; when associated with A-147." evidence="10 11">
    <original>H</original>
    <variation>A</variation>
    <location>
        <position position="169"/>
    </location>
</feature>
<feature type="strand" evidence="22">
    <location>
        <begin position="36"/>
        <end position="48"/>
    </location>
</feature>
<feature type="turn" evidence="22">
    <location>
        <begin position="49"/>
        <end position="52"/>
    </location>
</feature>
<feature type="strand" evidence="22">
    <location>
        <begin position="53"/>
        <end position="61"/>
    </location>
</feature>
<feature type="strand" evidence="22">
    <location>
        <begin position="64"/>
        <end position="75"/>
    </location>
</feature>
<feature type="helix" evidence="22">
    <location>
        <begin position="76"/>
        <end position="78"/>
    </location>
</feature>
<feature type="strand" evidence="22">
    <location>
        <begin position="81"/>
        <end position="84"/>
    </location>
</feature>
<feature type="strand" evidence="22">
    <location>
        <begin position="92"/>
        <end position="100"/>
    </location>
</feature>
<feature type="strand" evidence="22">
    <location>
        <begin position="103"/>
        <end position="111"/>
    </location>
</feature>
<feature type="helix" evidence="22">
    <location>
        <begin position="112"/>
        <end position="114"/>
    </location>
</feature>
<feature type="turn" evidence="22">
    <location>
        <begin position="124"/>
        <end position="126"/>
    </location>
</feature>
<feature type="turn" evidence="22">
    <location>
        <begin position="140"/>
        <end position="142"/>
    </location>
</feature>
<feature type="strand" evidence="21">
    <location>
        <begin position="145"/>
        <end position="147"/>
    </location>
</feature>
<feature type="helix" evidence="22">
    <location>
        <begin position="149"/>
        <end position="151"/>
    </location>
</feature>
<feature type="turn" evidence="22">
    <location>
        <begin position="162"/>
        <end position="164"/>
    </location>
</feature>
<feature type="strand" evidence="21">
    <location>
        <begin position="167"/>
        <end position="169"/>
    </location>
</feature>
<feature type="helix" evidence="22">
    <location>
        <begin position="171"/>
        <end position="173"/>
    </location>
</feature>
<feature type="helix" evidence="22">
    <location>
        <begin position="175"/>
        <end position="178"/>
    </location>
</feature>